<dbReference type="EC" id="2.7.7.38" evidence="1"/>
<dbReference type="EMBL" id="BX842648">
    <property type="protein sequence ID" value="CAE78756.1"/>
    <property type="molecule type" value="Genomic_DNA"/>
</dbReference>
<dbReference type="RefSeq" id="WP_011163358.1">
    <property type="nucleotide sequence ID" value="NC_005363.1"/>
</dbReference>
<dbReference type="SMR" id="Q6MPP1"/>
<dbReference type="STRING" id="264462.Bd0807"/>
<dbReference type="GeneID" id="93011883"/>
<dbReference type="KEGG" id="bba:Bd0807"/>
<dbReference type="eggNOG" id="COG1212">
    <property type="taxonomic scope" value="Bacteria"/>
</dbReference>
<dbReference type="HOGENOM" id="CLU_065038_0_1_7"/>
<dbReference type="UniPathway" id="UPA00030"/>
<dbReference type="UniPathway" id="UPA00358">
    <property type="reaction ID" value="UER00476"/>
</dbReference>
<dbReference type="Proteomes" id="UP000008080">
    <property type="component" value="Chromosome"/>
</dbReference>
<dbReference type="GO" id="GO:0005829">
    <property type="term" value="C:cytosol"/>
    <property type="evidence" value="ECO:0007669"/>
    <property type="project" value="TreeGrafter"/>
</dbReference>
<dbReference type="GO" id="GO:0008690">
    <property type="term" value="F:3-deoxy-manno-octulosonate cytidylyltransferase activity"/>
    <property type="evidence" value="ECO:0007669"/>
    <property type="project" value="UniProtKB-UniRule"/>
</dbReference>
<dbReference type="GO" id="GO:0033468">
    <property type="term" value="P:CMP-keto-3-deoxy-D-manno-octulosonic acid biosynthetic process"/>
    <property type="evidence" value="ECO:0007669"/>
    <property type="project" value="UniProtKB-UniRule"/>
</dbReference>
<dbReference type="GO" id="GO:0009103">
    <property type="term" value="P:lipopolysaccharide biosynthetic process"/>
    <property type="evidence" value="ECO:0007669"/>
    <property type="project" value="UniProtKB-UniRule"/>
</dbReference>
<dbReference type="CDD" id="cd02517">
    <property type="entry name" value="CMP-KDO-Synthetase"/>
    <property type="match status" value="1"/>
</dbReference>
<dbReference type="FunFam" id="3.90.550.10:FF:000011">
    <property type="entry name" value="3-deoxy-manno-octulosonate cytidylyltransferase"/>
    <property type="match status" value="1"/>
</dbReference>
<dbReference type="Gene3D" id="3.90.550.10">
    <property type="entry name" value="Spore Coat Polysaccharide Biosynthesis Protein SpsA, Chain A"/>
    <property type="match status" value="1"/>
</dbReference>
<dbReference type="HAMAP" id="MF_00057">
    <property type="entry name" value="KdsB"/>
    <property type="match status" value="1"/>
</dbReference>
<dbReference type="InterPro" id="IPR003329">
    <property type="entry name" value="Cytidylyl_trans"/>
</dbReference>
<dbReference type="InterPro" id="IPR004528">
    <property type="entry name" value="KdsB"/>
</dbReference>
<dbReference type="InterPro" id="IPR029044">
    <property type="entry name" value="Nucleotide-diphossugar_trans"/>
</dbReference>
<dbReference type="NCBIfam" id="TIGR00466">
    <property type="entry name" value="kdsB"/>
    <property type="match status" value="1"/>
</dbReference>
<dbReference type="NCBIfam" id="NF003950">
    <property type="entry name" value="PRK05450.1-3"/>
    <property type="match status" value="1"/>
</dbReference>
<dbReference type="NCBIfam" id="NF003952">
    <property type="entry name" value="PRK05450.1-5"/>
    <property type="match status" value="1"/>
</dbReference>
<dbReference type="NCBIfam" id="NF009905">
    <property type="entry name" value="PRK13368.1"/>
    <property type="match status" value="1"/>
</dbReference>
<dbReference type="PANTHER" id="PTHR42866">
    <property type="entry name" value="3-DEOXY-MANNO-OCTULOSONATE CYTIDYLYLTRANSFERASE"/>
    <property type="match status" value="1"/>
</dbReference>
<dbReference type="PANTHER" id="PTHR42866:SF2">
    <property type="entry name" value="3-DEOXY-MANNO-OCTULOSONATE CYTIDYLYLTRANSFERASE, MITOCHONDRIAL"/>
    <property type="match status" value="1"/>
</dbReference>
<dbReference type="Pfam" id="PF02348">
    <property type="entry name" value="CTP_transf_3"/>
    <property type="match status" value="1"/>
</dbReference>
<dbReference type="SUPFAM" id="SSF53448">
    <property type="entry name" value="Nucleotide-diphospho-sugar transferases"/>
    <property type="match status" value="1"/>
</dbReference>
<protein>
    <recommendedName>
        <fullName evidence="1">3-deoxy-manno-octulosonate cytidylyltransferase</fullName>
        <ecNumber evidence="1">2.7.7.38</ecNumber>
    </recommendedName>
    <alternativeName>
        <fullName evidence="1">CMP-2-keto-3-deoxyoctulosonic acid synthase</fullName>
        <shortName evidence="1">CKS</shortName>
        <shortName evidence="1">CMP-KDO synthase</shortName>
    </alternativeName>
</protein>
<evidence type="ECO:0000255" key="1">
    <source>
        <dbReference type="HAMAP-Rule" id="MF_00057"/>
    </source>
</evidence>
<reference key="1">
    <citation type="journal article" date="2004" name="Science">
        <title>A predator unmasked: life cycle of Bdellovibrio bacteriovorus from a genomic perspective.</title>
        <authorList>
            <person name="Rendulic S."/>
            <person name="Jagtap P."/>
            <person name="Rosinus A."/>
            <person name="Eppinger M."/>
            <person name="Baar C."/>
            <person name="Lanz C."/>
            <person name="Keller H."/>
            <person name="Lambert C."/>
            <person name="Evans K.J."/>
            <person name="Goesmann A."/>
            <person name="Meyer F."/>
            <person name="Sockett R.E."/>
            <person name="Schuster S.C."/>
        </authorList>
    </citation>
    <scope>NUCLEOTIDE SEQUENCE [LARGE SCALE GENOMIC DNA]</scope>
    <source>
        <strain>ATCC 15356 / DSM 50701 / NCIMB 9529 / HD100</strain>
    </source>
</reference>
<accession>Q6MPP1</accession>
<name>KDSB_BDEBA</name>
<organism>
    <name type="scientific">Bdellovibrio bacteriovorus (strain ATCC 15356 / DSM 50701 / NCIMB 9529 / HD100)</name>
    <dbReference type="NCBI Taxonomy" id="264462"/>
    <lineage>
        <taxon>Bacteria</taxon>
        <taxon>Pseudomonadati</taxon>
        <taxon>Bdellovibrionota</taxon>
        <taxon>Bdellovibrionia</taxon>
        <taxon>Bdellovibrionales</taxon>
        <taxon>Pseudobdellovibrionaceae</taxon>
        <taxon>Bdellovibrio</taxon>
    </lineage>
</organism>
<gene>
    <name evidence="1" type="primary">kdsB</name>
    <name type="ordered locus">Bd0807</name>
</gene>
<feature type="chain" id="PRO_0000370004" description="3-deoxy-manno-octulosonate cytidylyltransferase">
    <location>
        <begin position="1"/>
        <end position="247"/>
    </location>
</feature>
<proteinExistence type="inferred from homology"/>
<keyword id="KW-0963">Cytoplasm</keyword>
<keyword id="KW-0448">Lipopolysaccharide biosynthesis</keyword>
<keyword id="KW-0548">Nucleotidyltransferase</keyword>
<keyword id="KW-1185">Reference proteome</keyword>
<keyword id="KW-0808">Transferase</keyword>
<comment type="function">
    <text evidence="1">Activates KDO (a required 8-carbon sugar) for incorporation into bacterial lipopolysaccharide in Gram-negative bacteria.</text>
</comment>
<comment type="catalytic activity">
    <reaction evidence="1">
        <text>3-deoxy-alpha-D-manno-oct-2-ulosonate + CTP = CMP-3-deoxy-beta-D-manno-octulosonate + diphosphate</text>
        <dbReference type="Rhea" id="RHEA:23448"/>
        <dbReference type="ChEBI" id="CHEBI:33019"/>
        <dbReference type="ChEBI" id="CHEBI:37563"/>
        <dbReference type="ChEBI" id="CHEBI:85986"/>
        <dbReference type="ChEBI" id="CHEBI:85987"/>
        <dbReference type="EC" id="2.7.7.38"/>
    </reaction>
</comment>
<comment type="pathway">
    <text evidence="1">Nucleotide-sugar biosynthesis; CMP-3-deoxy-D-manno-octulosonate biosynthesis; CMP-3-deoxy-D-manno-octulosonate from 3-deoxy-D-manno-octulosonate and CTP: step 1/1.</text>
</comment>
<comment type="pathway">
    <text evidence="1">Bacterial outer membrane biogenesis; lipopolysaccharide biosynthesis.</text>
</comment>
<comment type="subcellular location">
    <subcellularLocation>
        <location evidence="1">Cytoplasm</location>
    </subcellularLocation>
</comment>
<comment type="similarity">
    <text evidence="1">Belongs to the KdsB family.</text>
</comment>
<sequence>MKIVGVIPARFGSTRFPGKPLVNLKGRPLIQWTVEGAKKSKLLSEVIVATDHEGIKAAAEAVGVKVVMTDSDLPTGSDRINAAIKDVACDVVVNIQGDEPLVTGELIDRLAQVFVDDPKMDMATLAHPISAEELQSMNSVKVVVNCRDEALYFSRYPMPYSRMSAQEAGSMDGCLKHIGMYAYSRNFLKQFCEAPPALIEKAESLEQLRALYLGAKIKVIRVKEASVGVDTPEDLARLEKLLSSQGM</sequence>